<organism>
    <name type="scientific">Citrobacter koseri (strain ATCC BAA-895 / CDC 4225-83 / SGSC4696)</name>
    <dbReference type="NCBI Taxonomy" id="290338"/>
    <lineage>
        <taxon>Bacteria</taxon>
        <taxon>Pseudomonadati</taxon>
        <taxon>Pseudomonadota</taxon>
        <taxon>Gammaproteobacteria</taxon>
        <taxon>Enterobacterales</taxon>
        <taxon>Enterobacteriaceae</taxon>
        <taxon>Citrobacter</taxon>
    </lineage>
</organism>
<proteinExistence type="inferred from homology"/>
<keyword id="KW-0010">Activator</keyword>
<keyword id="KW-0067">ATP-binding</keyword>
<keyword id="KW-0238">DNA-binding</keyword>
<keyword id="KW-0347">Helicase</keyword>
<keyword id="KW-0378">Hydrolase</keyword>
<keyword id="KW-0547">Nucleotide-binding</keyword>
<keyword id="KW-1185">Reference proteome</keyword>
<keyword id="KW-0804">Transcription</keyword>
<keyword id="KW-0805">Transcription regulation</keyword>
<name>RAPA_CITK8</name>
<accession>A8ALP3</accession>
<dbReference type="EC" id="3.6.4.-" evidence="1"/>
<dbReference type="EMBL" id="CP000822">
    <property type="protein sequence ID" value="ABV14406.1"/>
    <property type="molecule type" value="Genomic_DNA"/>
</dbReference>
<dbReference type="RefSeq" id="WP_012134109.1">
    <property type="nucleotide sequence ID" value="NC_009792.1"/>
</dbReference>
<dbReference type="SMR" id="A8ALP3"/>
<dbReference type="STRING" id="290338.CKO_03323"/>
<dbReference type="GeneID" id="45137088"/>
<dbReference type="KEGG" id="cko:CKO_03323"/>
<dbReference type="HOGENOM" id="CLU_011520_0_0_6"/>
<dbReference type="OrthoDB" id="9814088at2"/>
<dbReference type="Proteomes" id="UP000008148">
    <property type="component" value="Chromosome"/>
</dbReference>
<dbReference type="GO" id="GO:0005524">
    <property type="term" value="F:ATP binding"/>
    <property type="evidence" value="ECO:0007669"/>
    <property type="project" value="UniProtKB-UniRule"/>
</dbReference>
<dbReference type="GO" id="GO:0003677">
    <property type="term" value="F:DNA binding"/>
    <property type="evidence" value="ECO:0007669"/>
    <property type="project" value="UniProtKB-KW"/>
</dbReference>
<dbReference type="GO" id="GO:0004386">
    <property type="term" value="F:helicase activity"/>
    <property type="evidence" value="ECO:0007669"/>
    <property type="project" value="UniProtKB-UniRule"/>
</dbReference>
<dbReference type="GO" id="GO:0016817">
    <property type="term" value="F:hydrolase activity, acting on acid anhydrides"/>
    <property type="evidence" value="ECO:0007669"/>
    <property type="project" value="InterPro"/>
</dbReference>
<dbReference type="GO" id="GO:0006355">
    <property type="term" value="P:regulation of DNA-templated transcription"/>
    <property type="evidence" value="ECO:0007669"/>
    <property type="project" value="UniProtKB-UniRule"/>
</dbReference>
<dbReference type="CDD" id="cd18011">
    <property type="entry name" value="DEXDc_RapA"/>
    <property type="match status" value="1"/>
</dbReference>
<dbReference type="CDD" id="cd18793">
    <property type="entry name" value="SF2_C_SNF"/>
    <property type="match status" value="1"/>
</dbReference>
<dbReference type="FunFam" id="2.30.30.140:FF:000020">
    <property type="entry name" value="RNA polymerase-associated protein RapA"/>
    <property type="match status" value="1"/>
</dbReference>
<dbReference type="FunFam" id="3.30.360.80:FF:000001">
    <property type="entry name" value="RNA polymerase-associated protein RapA"/>
    <property type="match status" value="1"/>
</dbReference>
<dbReference type="FunFam" id="3.40.50.10810:FF:000012">
    <property type="entry name" value="RNA polymerase-associated protein RapA"/>
    <property type="match status" value="1"/>
</dbReference>
<dbReference type="FunFam" id="3.40.50.300:FF:000350">
    <property type="entry name" value="RNA polymerase-associated protein RapA"/>
    <property type="match status" value="1"/>
</dbReference>
<dbReference type="Gene3D" id="2.30.30.140">
    <property type="match status" value="1"/>
</dbReference>
<dbReference type="Gene3D" id="2.30.30.930">
    <property type="match status" value="1"/>
</dbReference>
<dbReference type="Gene3D" id="3.30.360.80">
    <property type="match status" value="1"/>
</dbReference>
<dbReference type="Gene3D" id="6.10.140.1500">
    <property type="match status" value="1"/>
</dbReference>
<dbReference type="Gene3D" id="6.10.140.2230">
    <property type="match status" value="1"/>
</dbReference>
<dbReference type="Gene3D" id="3.40.50.300">
    <property type="entry name" value="P-loop containing nucleotide triphosphate hydrolases"/>
    <property type="match status" value="1"/>
</dbReference>
<dbReference type="Gene3D" id="3.40.50.10810">
    <property type="entry name" value="Tandem AAA-ATPase domain"/>
    <property type="match status" value="1"/>
</dbReference>
<dbReference type="HAMAP" id="MF_01821">
    <property type="entry name" value="Helicase_RapA"/>
    <property type="match status" value="1"/>
</dbReference>
<dbReference type="InterPro" id="IPR014001">
    <property type="entry name" value="Helicase_ATP-bd"/>
</dbReference>
<dbReference type="InterPro" id="IPR001650">
    <property type="entry name" value="Helicase_C-like"/>
</dbReference>
<dbReference type="InterPro" id="IPR023949">
    <property type="entry name" value="Helicase_RapA"/>
</dbReference>
<dbReference type="InterPro" id="IPR027417">
    <property type="entry name" value="P-loop_NTPase"/>
</dbReference>
<dbReference type="InterPro" id="IPR022737">
    <property type="entry name" value="RapA_C"/>
</dbReference>
<dbReference type="InterPro" id="IPR038718">
    <property type="entry name" value="SNF2-like_sf"/>
</dbReference>
<dbReference type="InterPro" id="IPR049730">
    <property type="entry name" value="SNF2/RAD54-like_C"/>
</dbReference>
<dbReference type="InterPro" id="IPR000330">
    <property type="entry name" value="SNF2_N"/>
</dbReference>
<dbReference type="InterPro" id="IPR040765">
    <property type="entry name" value="Tudor_1_RapA"/>
</dbReference>
<dbReference type="InterPro" id="IPR040766">
    <property type="entry name" value="Tudor_2_RapA"/>
</dbReference>
<dbReference type="NCBIfam" id="NF003426">
    <property type="entry name" value="PRK04914.1"/>
    <property type="match status" value="1"/>
</dbReference>
<dbReference type="PANTHER" id="PTHR45766">
    <property type="entry name" value="DNA ANNEALING HELICASE AND ENDONUCLEASE ZRANB3 FAMILY MEMBER"/>
    <property type="match status" value="1"/>
</dbReference>
<dbReference type="PANTHER" id="PTHR45766:SF6">
    <property type="entry name" value="SWI_SNF-RELATED MATRIX-ASSOCIATED ACTIN-DEPENDENT REGULATOR OF CHROMATIN SUBFAMILY A-LIKE PROTEIN 1"/>
    <property type="match status" value="1"/>
</dbReference>
<dbReference type="Pfam" id="PF00271">
    <property type="entry name" value="Helicase_C"/>
    <property type="match status" value="1"/>
</dbReference>
<dbReference type="Pfam" id="PF12137">
    <property type="entry name" value="RapA_C"/>
    <property type="match status" value="1"/>
</dbReference>
<dbReference type="Pfam" id="PF00176">
    <property type="entry name" value="SNF2-rel_dom"/>
    <property type="match status" value="1"/>
</dbReference>
<dbReference type="Pfam" id="PF18339">
    <property type="entry name" value="Tudor_1_RapA"/>
    <property type="match status" value="1"/>
</dbReference>
<dbReference type="Pfam" id="PF18337">
    <property type="entry name" value="Tudor_RapA"/>
    <property type="match status" value="1"/>
</dbReference>
<dbReference type="SMART" id="SM00487">
    <property type="entry name" value="DEXDc"/>
    <property type="match status" value="1"/>
</dbReference>
<dbReference type="SMART" id="SM00490">
    <property type="entry name" value="HELICc"/>
    <property type="match status" value="1"/>
</dbReference>
<dbReference type="SUPFAM" id="SSF52540">
    <property type="entry name" value="P-loop containing nucleoside triphosphate hydrolases"/>
    <property type="match status" value="2"/>
</dbReference>
<dbReference type="PROSITE" id="PS51192">
    <property type="entry name" value="HELICASE_ATP_BIND_1"/>
    <property type="match status" value="1"/>
</dbReference>
<dbReference type="PROSITE" id="PS51194">
    <property type="entry name" value="HELICASE_CTER"/>
    <property type="match status" value="1"/>
</dbReference>
<gene>
    <name evidence="1" type="primary">rapA</name>
    <name type="ordered locus">CKO_03323</name>
</gene>
<reference key="1">
    <citation type="submission" date="2007-08" db="EMBL/GenBank/DDBJ databases">
        <authorList>
            <consortium name="The Citrobacter koseri Genome Sequencing Project"/>
            <person name="McClelland M."/>
            <person name="Sanderson E.K."/>
            <person name="Porwollik S."/>
            <person name="Spieth J."/>
            <person name="Clifton W.S."/>
            <person name="Latreille P."/>
            <person name="Courtney L."/>
            <person name="Wang C."/>
            <person name="Pepin K."/>
            <person name="Bhonagiri V."/>
            <person name="Nash W."/>
            <person name="Johnson M."/>
            <person name="Thiruvilangam P."/>
            <person name="Wilson R."/>
        </authorList>
    </citation>
    <scope>NUCLEOTIDE SEQUENCE [LARGE SCALE GENOMIC DNA]</scope>
    <source>
        <strain>ATCC BAA-895 / CDC 4225-83 / SGSC4696</strain>
    </source>
</reference>
<sequence length="968" mass="109614">MPFTLGQRWISDTESELGLGTVVAMDARTVTLLFPATGENRLYARSDSPVTRVMFNPGDTITSHEGWQLQIDEVKEENGLLAYTGTRLDTEETAVTLREVLLDSKLVFSKPQDRLFAGQIDRMDRFALRYRARKFQSEQYRMPWSGLRGQRTSLIPHQLNIAHDVGRRHAPRVLLADEVGLGKTIEAGMILHQQLLSGAAERVLIIVPETLQHQWLVEMLRRFNLRFALFDDERYTEAQHDAYNPFETEQLVICSLDFARRNKQRLEHLCDAQWDLLVVDEAHHLVWSEDAPSREYMAIEQLAERVPGVLLLTATPEQLGMESHFARLRLLDPSRFHDFEQFVEEQKNYRPVADAVAMLLAGNKLSNEELNMLGDLIGEQDIEPLLQTANSDRDGAQNARQELVSMLMDRHGTSRVLFRNTRNGVKGFPKRELHTIKLPLPTQYQTAIKVSGIMGARKSAEDRARDMLYPEQIYQEFEGDSGTWWNFDPRVEWLMGHLTSHRSQKVLVICAKAATALQLEQVLREREGIRAAVFHEGMSIIERDRAAAWFSEEDSGAQVLLCSEIGSEGRNFQFASNLVMFDLPFNPDLLEQRIGRLDRIGQAHDIQIHVPYLEKTAQSVLVRWYHEGLDAFEHTCPTGRAIYDTVYHDLIAYLATPENTDGFDALIKTCREQHEALKAQLEQGRDRLLEIHSNGGEKAQALAESIEEQDDDTSLIAFAMNLFDIVGINQDDRGENLIVLTPSDHMLVPDFPGLPEDGCTITFERDVALSREDAQFVTWEHPLIRNGLDLILSGDTGSSTISLLKNKALPVGTLLVELVYVVEAQAPKHLQLNRFLPPTPVRMLLDKNGNNLAAQVEFETFNRQLSAVNRHTGSKLVNAVQQDVHAILQLGEAQAEKSARALIDAARSEADEKLSAELSRLEALRAVNPNIRDDELAAIDSNRQQVMESLDQANWRLDALRLIVVTHQ</sequence>
<feature type="chain" id="PRO_1000088350" description="RNA polymerase-associated protein RapA">
    <location>
        <begin position="1"/>
        <end position="968"/>
    </location>
</feature>
<feature type="domain" description="Helicase ATP-binding" evidence="1">
    <location>
        <begin position="164"/>
        <end position="334"/>
    </location>
</feature>
<feature type="domain" description="Helicase C-terminal" evidence="1">
    <location>
        <begin position="490"/>
        <end position="644"/>
    </location>
</feature>
<feature type="short sequence motif" description="DEAH box">
    <location>
        <begin position="280"/>
        <end position="283"/>
    </location>
</feature>
<feature type="binding site" evidence="1">
    <location>
        <begin position="177"/>
        <end position="184"/>
    </location>
    <ligand>
        <name>ATP</name>
        <dbReference type="ChEBI" id="CHEBI:30616"/>
    </ligand>
</feature>
<protein>
    <recommendedName>
        <fullName evidence="1">RNA polymerase-associated protein RapA</fullName>
        <ecNumber evidence="1">3.6.4.-</ecNumber>
    </recommendedName>
    <alternativeName>
        <fullName evidence="1">ATP-dependent helicase HepA</fullName>
    </alternativeName>
</protein>
<comment type="function">
    <text evidence="1">Transcription regulator that activates transcription by stimulating RNA polymerase (RNAP) recycling in case of stress conditions such as supercoiled DNA or high salt concentrations. Probably acts by releasing the RNAP, when it is trapped or immobilized on tightly supercoiled DNA. Does not activate transcription on linear DNA. Probably not involved in DNA repair.</text>
</comment>
<comment type="subunit">
    <text evidence="1">Interacts with the RNAP. Has a higher affinity for the core RNAP than for the holoenzyme. Its ATPase activity is stimulated by binding to RNAP.</text>
</comment>
<comment type="similarity">
    <text evidence="1">Belongs to the SNF2/RAD54 helicase family. RapA subfamily.</text>
</comment>
<evidence type="ECO:0000255" key="1">
    <source>
        <dbReference type="HAMAP-Rule" id="MF_01821"/>
    </source>
</evidence>